<comment type="function">
    <text evidence="1">Rnase which modulates cell survival under stress conditions. Released from the vacuole to the cytoplasm during stress to promote tRNA and rRNA cleavage and to activate separately a downstream pathway that promotes cell death. Involved in cell size, vacuolar morphology and growth at high temperatures and high salt concentration (By similarity).</text>
</comment>
<comment type="catalytic activity">
    <reaction evidence="3 4">
        <text>a ribonucleotidyl-ribonucleotide-RNA + H2O = a 3'-end 3'-phospho-ribonucleotide-RNA + a 5'-end dephospho-ribonucleoside-RNA + H(+)</text>
        <dbReference type="Rhea" id="RHEA:68052"/>
        <dbReference type="Rhea" id="RHEA-COMP:10463"/>
        <dbReference type="Rhea" id="RHEA-COMP:13936"/>
        <dbReference type="Rhea" id="RHEA-COMP:17355"/>
        <dbReference type="ChEBI" id="CHEBI:15377"/>
        <dbReference type="ChEBI" id="CHEBI:15378"/>
        <dbReference type="ChEBI" id="CHEBI:83062"/>
        <dbReference type="ChEBI" id="CHEBI:138284"/>
        <dbReference type="ChEBI" id="CHEBI:173118"/>
        <dbReference type="EC" id="4.6.1.19"/>
    </reaction>
</comment>
<comment type="subcellular location">
    <subcellularLocation>
        <location>Vacuole lumen</location>
    </subcellularLocation>
    <subcellularLocation>
        <location>Cytoplasm</location>
    </subcellularLocation>
    <text evidence="1">Is released from the vacuole to the cytoplasm during stress conditions like oxidative stress or stationary phase stress.</text>
</comment>
<comment type="similarity">
    <text evidence="6">Belongs to the RNase T2 family.</text>
</comment>
<reference key="1">
    <citation type="journal article" date="2004" name="Nature">
        <title>Genome evolution in yeasts.</title>
        <authorList>
            <person name="Dujon B."/>
            <person name="Sherman D."/>
            <person name="Fischer G."/>
            <person name="Durrens P."/>
            <person name="Casaregola S."/>
            <person name="Lafontaine I."/>
            <person name="de Montigny J."/>
            <person name="Marck C."/>
            <person name="Neuveglise C."/>
            <person name="Talla E."/>
            <person name="Goffard N."/>
            <person name="Frangeul L."/>
            <person name="Aigle M."/>
            <person name="Anthouard V."/>
            <person name="Babour A."/>
            <person name="Barbe V."/>
            <person name="Barnay S."/>
            <person name="Blanchin S."/>
            <person name="Beckerich J.-M."/>
            <person name="Beyne E."/>
            <person name="Bleykasten C."/>
            <person name="Boisrame A."/>
            <person name="Boyer J."/>
            <person name="Cattolico L."/>
            <person name="Confanioleri F."/>
            <person name="de Daruvar A."/>
            <person name="Despons L."/>
            <person name="Fabre E."/>
            <person name="Fairhead C."/>
            <person name="Ferry-Dumazet H."/>
            <person name="Groppi A."/>
            <person name="Hantraye F."/>
            <person name="Hennequin C."/>
            <person name="Jauniaux N."/>
            <person name="Joyet P."/>
            <person name="Kachouri R."/>
            <person name="Kerrest A."/>
            <person name="Koszul R."/>
            <person name="Lemaire M."/>
            <person name="Lesur I."/>
            <person name="Ma L."/>
            <person name="Muller H."/>
            <person name="Nicaud J.-M."/>
            <person name="Nikolski M."/>
            <person name="Oztas S."/>
            <person name="Ozier-Kalogeropoulos O."/>
            <person name="Pellenz S."/>
            <person name="Potier S."/>
            <person name="Richard G.-F."/>
            <person name="Straub M.-L."/>
            <person name="Suleau A."/>
            <person name="Swennen D."/>
            <person name="Tekaia F."/>
            <person name="Wesolowski-Louvel M."/>
            <person name="Westhof E."/>
            <person name="Wirth B."/>
            <person name="Zeniou-Meyer M."/>
            <person name="Zivanovic Y."/>
            <person name="Bolotin-Fukuhara M."/>
            <person name="Thierry A."/>
            <person name="Bouchier C."/>
            <person name="Caudron B."/>
            <person name="Scarpelli C."/>
            <person name="Gaillardin C."/>
            <person name="Weissenbach J."/>
            <person name="Wincker P."/>
            <person name="Souciet J.-L."/>
        </authorList>
    </citation>
    <scope>NUCLEOTIDE SEQUENCE [LARGE SCALE GENOMIC DNA]</scope>
    <source>
        <strain>ATCC 36239 / CBS 767 / BCRC 21394 / JCM 1990 / NBRC 0083 / IGC 2968</strain>
    </source>
</reference>
<accession>Q6BHB1</accession>
<sequence>MLALILTISICIFLKGSTCSYINLGSEGIVFGAPNCPVDIPLTCTNSTPIDNSCCFESPGGILLSTQFWDYYPPIGGNESFTLHGLWPDNCDGTYEQFCDDSLNIRSATDIVLNQFGDKVLYGKMSEFWKNFNGNDESLWIHEFNKHATCVKTIRPTCYDNQRYVKNKNVYDFYNITMNLYEKLPTFQFLAAEGIVPSLTQKYSKKQINDALTKYFGKAVYFKCNKYKALQEVWYYHYLQGSLKEENFSPIDTIINSNCPEENIQFIPKNGFNPGPQPPKSPRKGYLESPGKKGCLISNGLWYEAGTCATYAISQQEFGGYKIRSSKGYCGMNSQGQFTCNKQVDPTKNQFQYNKDTRKIGYGGNFAWCLDTEHKHGDGKTAQTPIKISDGQCDSFPVQYGGK</sequence>
<organism>
    <name type="scientific">Debaryomyces hansenii (strain ATCC 36239 / CBS 767 / BCRC 21394 / JCM 1990 / NBRC 0083 / IGC 2968)</name>
    <name type="common">Yeast</name>
    <name type="synonym">Torulaspora hansenii</name>
    <dbReference type="NCBI Taxonomy" id="284592"/>
    <lineage>
        <taxon>Eukaryota</taxon>
        <taxon>Fungi</taxon>
        <taxon>Dikarya</taxon>
        <taxon>Ascomycota</taxon>
        <taxon>Saccharomycotina</taxon>
        <taxon>Pichiomycetes</taxon>
        <taxon>Debaryomycetaceae</taxon>
        <taxon>Debaryomyces</taxon>
    </lineage>
</organism>
<protein>
    <recommendedName>
        <fullName>Ribonuclease T2-like</fullName>
        <shortName>RNase T2-like</shortName>
        <ecNumber>4.6.1.19</ecNumber>
    </recommendedName>
</protein>
<proteinExistence type="inferred from homology"/>
<name>RNY1_DEBHA</name>
<gene>
    <name type="primary">RNY1</name>
    <name type="ordered locus">DEHA2G19932g</name>
</gene>
<evidence type="ECO:0000250" key="1"/>
<evidence type="ECO:0000255" key="2"/>
<evidence type="ECO:0000255" key="3">
    <source>
        <dbReference type="PROSITE-ProRule" id="PRU10045"/>
    </source>
</evidence>
<evidence type="ECO:0000255" key="4">
    <source>
        <dbReference type="PROSITE-ProRule" id="PRU10046"/>
    </source>
</evidence>
<evidence type="ECO:0000256" key="5">
    <source>
        <dbReference type="SAM" id="MobiDB-lite"/>
    </source>
</evidence>
<evidence type="ECO:0000305" key="6"/>
<keyword id="KW-0963">Cytoplasm</keyword>
<keyword id="KW-1015">Disulfide bond</keyword>
<keyword id="KW-0255">Endonuclease</keyword>
<keyword id="KW-0325">Glycoprotein</keyword>
<keyword id="KW-0378">Hydrolase</keyword>
<keyword id="KW-0456">Lyase</keyword>
<keyword id="KW-0540">Nuclease</keyword>
<keyword id="KW-1185">Reference proteome</keyword>
<keyword id="KW-0732">Signal</keyword>
<keyword id="KW-0926">Vacuole</keyword>
<dbReference type="EC" id="4.6.1.19"/>
<dbReference type="EMBL" id="CR382139">
    <property type="protein sequence ID" value="CAG90919.2"/>
    <property type="molecule type" value="Genomic_DNA"/>
</dbReference>
<dbReference type="RefSeq" id="XP_462410.2">
    <property type="nucleotide sequence ID" value="XM_462410.1"/>
</dbReference>
<dbReference type="SMR" id="Q6BHB1"/>
<dbReference type="FunCoup" id="Q6BHB1">
    <property type="interactions" value="158"/>
</dbReference>
<dbReference type="STRING" id="284592.Q6BHB1"/>
<dbReference type="GlyCosmos" id="Q6BHB1">
    <property type="glycosylation" value="2 sites, No reported glycans"/>
</dbReference>
<dbReference type="GeneID" id="2905355"/>
<dbReference type="KEGG" id="dha:DEHA2G19932g"/>
<dbReference type="VEuPathDB" id="FungiDB:DEHA2G19932g"/>
<dbReference type="eggNOG" id="KOG1642">
    <property type="taxonomic scope" value="Eukaryota"/>
</dbReference>
<dbReference type="HOGENOM" id="CLU_037966_0_1_1"/>
<dbReference type="InParanoid" id="Q6BHB1"/>
<dbReference type="OMA" id="HESLWIH"/>
<dbReference type="OrthoDB" id="435754at2759"/>
<dbReference type="Proteomes" id="UP000000599">
    <property type="component" value="Chromosome G"/>
</dbReference>
<dbReference type="GO" id="GO:0005829">
    <property type="term" value="C:cytosol"/>
    <property type="evidence" value="ECO:0007669"/>
    <property type="project" value="EnsemblFungi"/>
</dbReference>
<dbReference type="GO" id="GO:0005576">
    <property type="term" value="C:extracellular region"/>
    <property type="evidence" value="ECO:0007669"/>
    <property type="project" value="EnsemblFungi"/>
</dbReference>
<dbReference type="GO" id="GO:0000324">
    <property type="term" value="C:fungal-type vacuole"/>
    <property type="evidence" value="ECO:0007669"/>
    <property type="project" value="EnsemblFungi"/>
</dbReference>
<dbReference type="GO" id="GO:0005775">
    <property type="term" value="C:vacuolar lumen"/>
    <property type="evidence" value="ECO:0007669"/>
    <property type="project" value="UniProtKB-SubCell"/>
</dbReference>
<dbReference type="GO" id="GO:0033897">
    <property type="term" value="F:ribonuclease T2 activity"/>
    <property type="evidence" value="ECO:0007669"/>
    <property type="project" value="UniProtKB-EC"/>
</dbReference>
<dbReference type="GO" id="GO:0003723">
    <property type="term" value="F:RNA binding"/>
    <property type="evidence" value="ECO:0007669"/>
    <property type="project" value="InterPro"/>
</dbReference>
<dbReference type="GO" id="GO:0006915">
    <property type="term" value="P:apoptotic process"/>
    <property type="evidence" value="ECO:0007669"/>
    <property type="project" value="EnsemblFungi"/>
</dbReference>
<dbReference type="GO" id="GO:0000902">
    <property type="term" value="P:cell morphogenesis"/>
    <property type="evidence" value="ECO:0007669"/>
    <property type="project" value="EnsemblFungi"/>
</dbReference>
<dbReference type="GO" id="GO:0006402">
    <property type="term" value="P:mRNA catabolic process"/>
    <property type="evidence" value="ECO:0007669"/>
    <property type="project" value="EnsemblFungi"/>
</dbReference>
<dbReference type="CDD" id="cd01061">
    <property type="entry name" value="RNase_T2_euk"/>
    <property type="match status" value="1"/>
</dbReference>
<dbReference type="FunFam" id="3.90.730.10:FF:000004">
    <property type="entry name" value="Ribonuclease T2-like"/>
    <property type="match status" value="1"/>
</dbReference>
<dbReference type="Gene3D" id="3.90.730.10">
    <property type="entry name" value="Ribonuclease T2-like"/>
    <property type="match status" value="1"/>
</dbReference>
<dbReference type="InterPro" id="IPR033697">
    <property type="entry name" value="Ribonuclease_T2_eukaryotic"/>
</dbReference>
<dbReference type="InterPro" id="IPR001568">
    <property type="entry name" value="RNase_T2-like"/>
</dbReference>
<dbReference type="InterPro" id="IPR036430">
    <property type="entry name" value="RNase_T2-like_sf"/>
</dbReference>
<dbReference type="InterPro" id="IPR018188">
    <property type="entry name" value="RNase_T2_His_AS_1"/>
</dbReference>
<dbReference type="InterPro" id="IPR033130">
    <property type="entry name" value="RNase_T2_His_AS_2"/>
</dbReference>
<dbReference type="PANTHER" id="PTHR11240">
    <property type="entry name" value="RIBONUCLEASE T2"/>
    <property type="match status" value="1"/>
</dbReference>
<dbReference type="PANTHER" id="PTHR11240:SF22">
    <property type="entry name" value="RIBONUCLEASE T2"/>
    <property type="match status" value="1"/>
</dbReference>
<dbReference type="Pfam" id="PF00445">
    <property type="entry name" value="Ribonuclease_T2"/>
    <property type="match status" value="1"/>
</dbReference>
<dbReference type="Pfam" id="PF25488">
    <property type="entry name" value="RNaseT2L_C"/>
    <property type="match status" value="1"/>
</dbReference>
<dbReference type="SUPFAM" id="SSF55895">
    <property type="entry name" value="Ribonuclease Rh-like"/>
    <property type="match status" value="1"/>
</dbReference>
<dbReference type="PROSITE" id="PS00530">
    <property type="entry name" value="RNASE_T2_1"/>
    <property type="match status" value="1"/>
</dbReference>
<dbReference type="PROSITE" id="PS00531">
    <property type="entry name" value="RNASE_T2_2"/>
    <property type="match status" value="1"/>
</dbReference>
<feature type="signal peptide" evidence="2">
    <location>
        <begin position="1"/>
        <end position="19"/>
    </location>
</feature>
<feature type="chain" id="PRO_0000043254" description="Ribonuclease T2-like">
    <location>
        <begin position="20"/>
        <end position="403"/>
    </location>
</feature>
<feature type="region of interest" description="Disordered" evidence="5">
    <location>
        <begin position="268"/>
        <end position="288"/>
    </location>
</feature>
<feature type="active site" evidence="1">
    <location>
        <position position="84"/>
    </location>
</feature>
<feature type="active site" evidence="1">
    <location>
        <position position="143"/>
    </location>
</feature>
<feature type="active site" evidence="1">
    <location>
        <position position="147"/>
    </location>
</feature>
<feature type="glycosylation site" description="N-linked (GlcNAc...) asparagine" evidence="2">
    <location>
        <position position="78"/>
    </location>
</feature>
<feature type="glycosylation site" description="N-linked (GlcNAc...) asparagine" evidence="2">
    <location>
        <position position="175"/>
    </location>
</feature>
<feature type="disulfide bond" evidence="1">
    <location>
        <begin position="36"/>
        <end position="55"/>
    </location>
</feature>
<feature type="disulfide bond" evidence="1">
    <location>
        <begin position="44"/>
        <end position="91"/>
    </location>
</feature>
<feature type="disulfide bond" evidence="1">
    <location>
        <begin position="54"/>
        <end position="158"/>
    </location>
</feature>
<feature type="disulfide bond" evidence="1">
    <location>
        <begin position="99"/>
        <end position="150"/>
    </location>
</feature>
<feature type="disulfide bond" evidence="1">
    <location>
        <begin position="224"/>
        <end position="259"/>
    </location>
</feature>